<feature type="chain" id="PRO_0000270226" description="Methionine import ATP-binding protein MetN 1">
    <location>
        <begin position="1"/>
        <end position="356"/>
    </location>
</feature>
<feature type="domain" description="ABC transporter" evidence="1">
    <location>
        <begin position="15"/>
        <end position="254"/>
    </location>
</feature>
<feature type="binding site" evidence="1">
    <location>
        <begin position="51"/>
        <end position="58"/>
    </location>
    <ligand>
        <name>ATP</name>
        <dbReference type="ChEBI" id="CHEBI:30616"/>
    </ligand>
</feature>
<reference key="1">
    <citation type="journal article" date="2004" name="Nucleic Acids Res.">
        <title>Unique features revealed by the genome sequence of Acinetobacter sp. ADP1, a versatile and naturally transformation competent bacterium.</title>
        <authorList>
            <person name="Barbe V."/>
            <person name="Vallenet D."/>
            <person name="Fonknechten N."/>
            <person name="Kreimeyer A."/>
            <person name="Oztas S."/>
            <person name="Labarre L."/>
            <person name="Cruveiller S."/>
            <person name="Robert C."/>
            <person name="Duprat S."/>
            <person name="Wincker P."/>
            <person name="Ornston L.N."/>
            <person name="Weissenbach J."/>
            <person name="Marliere P."/>
            <person name="Cohen G.N."/>
            <person name="Medigue C."/>
        </authorList>
    </citation>
    <scope>NUCLEOTIDE SEQUENCE [LARGE SCALE GENOMIC DNA]</scope>
    <source>
        <strain>ATCC 33305 / BD413 / ADP1</strain>
    </source>
</reference>
<organism>
    <name type="scientific">Acinetobacter baylyi (strain ATCC 33305 / BD413 / ADP1)</name>
    <dbReference type="NCBI Taxonomy" id="62977"/>
    <lineage>
        <taxon>Bacteria</taxon>
        <taxon>Pseudomonadati</taxon>
        <taxon>Pseudomonadota</taxon>
        <taxon>Gammaproteobacteria</taxon>
        <taxon>Moraxellales</taxon>
        <taxon>Moraxellaceae</taxon>
        <taxon>Acinetobacter</taxon>
    </lineage>
</organism>
<protein>
    <recommendedName>
        <fullName evidence="1">Methionine import ATP-binding protein MetN 1</fullName>
        <ecNumber evidence="1">7.4.2.11</ecNumber>
    </recommendedName>
</protein>
<evidence type="ECO:0000255" key="1">
    <source>
        <dbReference type="HAMAP-Rule" id="MF_01719"/>
    </source>
</evidence>
<comment type="function">
    <text evidence="1">Part of the ABC transporter complex MetNIQ involved in methionine import. Responsible for energy coupling to the transport system.</text>
</comment>
<comment type="catalytic activity">
    <reaction evidence="1">
        <text>L-methionine(out) + ATP + H2O = L-methionine(in) + ADP + phosphate + H(+)</text>
        <dbReference type="Rhea" id="RHEA:29779"/>
        <dbReference type="ChEBI" id="CHEBI:15377"/>
        <dbReference type="ChEBI" id="CHEBI:15378"/>
        <dbReference type="ChEBI" id="CHEBI:30616"/>
        <dbReference type="ChEBI" id="CHEBI:43474"/>
        <dbReference type="ChEBI" id="CHEBI:57844"/>
        <dbReference type="ChEBI" id="CHEBI:456216"/>
        <dbReference type="EC" id="7.4.2.11"/>
    </reaction>
</comment>
<comment type="catalytic activity">
    <reaction evidence="1">
        <text>D-methionine(out) + ATP + H2O = D-methionine(in) + ADP + phosphate + H(+)</text>
        <dbReference type="Rhea" id="RHEA:29767"/>
        <dbReference type="ChEBI" id="CHEBI:15377"/>
        <dbReference type="ChEBI" id="CHEBI:15378"/>
        <dbReference type="ChEBI" id="CHEBI:30616"/>
        <dbReference type="ChEBI" id="CHEBI:43474"/>
        <dbReference type="ChEBI" id="CHEBI:57932"/>
        <dbReference type="ChEBI" id="CHEBI:456216"/>
        <dbReference type="EC" id="7.4.2.11"/>
    </reaction>
</comment>
<comment type="subunit">
    <text evidence="1">The complex is composed of two ATP-binding proteins (MetN), two transmembrane proteins (MetI) and a solute-binding protein (MetQ).</text>
</comment>
<comment type="subcellular location">
    <subcellularLocation>
        <location evidence="1">Cell inner membrane</location>
        <topology evidence="1">Peripheral membrane protein</topology>
    </subcellularLocation>
</comment>
<comment type="similarity">
    <text evidence="1">Belongs to the ABC transporter superfamily. Methionine importer (TC 3.A.1.24) family.</text>
</comment>
<gene>
    <name evidence="1" type="primary">metN1</name>
    <name type="ordered locus">ACIAD2069</name>
</gene>
<proteinExistence type="inferred from homology"/>
<accession>Q6FAN3</accession>
<name>METN1_ACIAD</name>
<keyword id="KW-0029">Amino-acid transport</keyword>
<keyword id="KW-0067">ATP-binding</keyword>
<keyword id="KW-0997">Cell inner membrane</keyword>
<keyword id="KW-1003">Cell membrane</keyword>
<keyword id="KW-0472">Membrane</keyword>
<keyword id="KW-0547">Nucleotide-binding</keyword>
<keyword id="KW-1278">Translocase</keyword>
<keyword id="KW-0813">Transport</keyword>
<dbReference type="EC" id="7.4.2.11" evidence="1"/>
<dbReference type="EMBL" id="CR543861">
    <property type="protein sequence ID" value="CAG68880.1"/>
    <property type="molecule type" value="Genomic_DNA"/>
</dbReference>
<dbReference type="RefSeq" id="WP_004927501.1">
    <property type="nucleotide sequence ID" value="NC_005966.1"/>
</dbReference>
<dbReference type="SMR" id="Q6FAN3"/>
<dbReference type="STRING" id="202950.GCA_001485005_00310"/>
<dbReference type="GeneID" id="45234417"/>
<dbReference type="KEGG" id="aci:ACIAD2069"/>
<dbReference type="eggNOG" id="COG1135">
    <property type="taxonomic scope" value="Bacteria"/>
</dbReference>
<dbReference type="HOGENOM" id="CLU_000604_1_3_6"/>
<dbReference type="OrthoDB" id="9802264at2"/>
<dbReference type="BioCyc" id="ASP62977:ACIAD_RS09495-MONOMER"/>
<dbReference type="Proteomes" id="UP000000430">
    <property type="component" value="Chromosome"/>
</dbReference>
<dbReference type="GO" id="GO:0005886">
    <property type="term" value="C:plasma membrane"/>
    <property type="evidence" value="ECO:0007669"/>
    <property type="project" value="UniProtKB-SubCell"/>
</dbReference>
<dbReference type="GO" id="GO:0033232">
    <property type="term" value="F:ABC-type D-methionine transporter activity"/>
    <property type="evidence" value="ECO:0007669"/>
    <property type="project" value="UniProtKB-EC"/>
</dbReference>
<dbReference type="GO" id="GO:0005524">
    <property type="term" value="F:ATP binding"/>
    <property type="evidence" value="ECO:0007669"/>
    <property type="project" value="UniProtKB-KW"/>
</dbReference>
<dbReference type="GO" id="GO:0016887">
    <property type="term" value="F:ATP hydrolysis activity"/>
    <property type="evidence" value="ECO:0007669"/>
    <property type="project" value="InterPro"/>
</dbReference>
<dbReference type="CDD" id="cd03258">
    <property type="entry name" value="ABC_MetN_methionine_transporter"/>
    <property type="match status" value="1"/>
</dbReference>
<dbReference type="FunFam" id="3.40.50.300:FF:000056">
    <property type="entry name" value="Cell division ATP-binding protein FtsE"/>
    <property type="match status" value="1"/>
</dbReference>
<dbReference type="Gene3D" id="3.30.70.260">
    <property type="match status" value="1"/>
</dbReference>
<dbReference type="Gene3D" id="3.40.50.300">
    <property type="entry name" value="P-loop containing nucleotide triphosphate hydrolases"/>
    <property type="match status" value="1"/>
</dbReference>
<dbReference type="InterPro" id="IPR003593">
    <property type="entry name" value="AAA+_ATPase"/>
</dbReference>
<dbReference type="InterPro" id="IPR003439">
    <property type="entry name" value="ABC_transporter-like_ATP-bd"/>
</dbReference>
<dbReference type="InterPro" id="IPR017871">
    <property type="entry name" value="ABC_transporter-like_CS"/>
</dbReference>
<dbReference type="InterPro" id="IPR045865">
    <property type="entry name" value="ACT-like_dom_sf"/>
</dbReference>
<dbReference type="InterPro" id="IPR041701">
    <property type="entry name" value="MetN_ABC"/>
</dbReference>
<dbReference type="InterPro" id="IPR050086">
    <property type="entry name" value="MetN_ABC_transporter-like"/>
</dbReference>
<dbReference type="InterPro" id="IPR018449">
    <property type="entry name" value="NIL_domain"/>
</dbReference>
<dbReference type="InterPro" id="IPR027417">
    <property type="entry name" value="P-loop_NTPase"/>
</dbReference>
<dbReference type="PANTHER" id="PTHR43166">
    <property type="entry name" value="AMINO ACID IMPORT ATP-BINDING PROTEIN"/>
    <property type="match status" value="1"/>
</dbReference>
<dbReference type="PANTHER" id="PTHR43166:SF30">
    <property type="entry name" value="METHIONINE IMPORT ATP-BINDING PROTEIN METN"/>
    <property type="match status" value="1"/>
</dbReference>
<dbReference type="Pfam" id="PF00005">
    <property type="entry name" value="ABC_tran"/>
    <property type="match status" value="1"/>
</dbReference>
<dbReference type="Pfam" id="PF09383">
    <property type="entry name" value="NIL"/>
    <property type="match status" value="1"/>
</dbReference>
<dbReference type="SMART" id="SM00382">
    <property type="entry name" value="AAA"/>
    <property type="match status" value="1"/>
</dbReference>
<dbReference type="SMART" id="SM00930">
    <property type="entry name" value="NIL"/>
    <property type="match status" value="1"/>
</dbReference>
<dbReference type="SUPFAM" id="SSF55021">
    <property type="entry name" value="ACT-like"/>
    <property type="match status" value="1"/>
</dbReference>
<dbReference type="SUPFAM" id="SSF52540">
    <property type="entry name" value="P-loop containing nucleoside triphosphate hydrolases"/>
    <property type="match status" value="1"/>
</dbReference>
<dbReference type="PROSITE" id="PS00211">
    <property type="entry name" value="ABC_TRANSPORTER_1"/>
    <property type="match status" value="1"/>
</dbReference>
<dbReference type="PROSITE" id="PS50893">
    <property type="entry name" value="ABC_TRANSPORTER_2"/>
    <property type="match status" value="1"/>
</dbReference>
<dbReference type="PROSITE" id="PS51264">
    <property type="entry name" value="METN"/>
    <property type="match status" value="1"/>
</dbReference>
<sequence length="356" mass="39797">MVSFGSHTDFSVPHIQIRALNKTYASQGQHVHALKDIDLDIPEGKILGIIGKSGAGKSSLIRTLNGLEHPSSGSIKIYQNELTTLDHDHLIKLRQRIGMIFQHFNLMSAKTVWENVALPLKVSGYDKAEIKNRVDEVLSLVGLAHKADQYPAQLSGGQKQRVGIARALVHHPEILLCDEATSALDPESTSVILNLLKQINQELGITIVLITHEMQVIREICDQVVVIDHGEIVESGQVWSVFSNPVQPITQELLSLEQLELPFDLHREINANSTHSILRIKYQSEAHRSPDLNNILSSFDTPVYLYQSHIDTIQQHLIGNLIIGIPKLDLNINTLQQKLLPFIHHIEVIGYARPTH</sequence>